<protein>
    <recommendedName>
        <fullName>Torsin-4A</fullName>
    </recommendedName>
    <alternativeName>
        <fullName>Torsin family 4 member A</fullName>
    </alternativeName>
</protein>
<name>TOR4A_MOUSE</name>
<organism>
    <name type="scientific">Mus musculus</name>
    <name type="common">Mouse</name>
    <dbReference type="NCBI Taxonomy" id="10090"/>
    <lineage>
        <taxon>Eukaryota</taxon>
        <taxon>Metazoa</taxon>
        <taxon>Chordata</taxon>
        <taxon>Craniata</taxon>
        <taxon>Vertebrata</taxon>
        <taxon>Euteleostomi</taxon>
        <taxon>Mammalia</taxon>
        <taxon>Eutheria</taxon>
        <taxon>Euarchontoglires</taxon>
        <taxon>Glires</taxon>
        <taxon>Rodentia</taxon>
        <taxon>Myomorpha</taxon>
        <taxon>Muroidea</taxon>
        <taxon>Muridae</taxon>
        <taxon>Murinae</taxon>
        <taxon>Mus</taxon>
        <taxon>Mus</taxon>
    </lineage>
</organism>
<sequence length="426" mass="47586">MDRSHPSLEPQAKGPCVIAPVRAVLRLRRRVCVLRKRRLLQPGTEPDSGTGTLGPTGSLGTLRADLDQPKFFTFDSLTELTSRTPRKRRRRSRVVLYPETSRKCRPRTERQSRAQRCLLLLVAIVGFQVLNAIENLDDNAQRYDLDGLEKALQRSVFGQPAAVGRIMALLRDYLATHVHSHPLLLALHGPSGVGKSHVGRLLARHFRAVLEDGALVLQYHARYHCPEPRPVQDCRKELAQRVADVVAQAEAEEKTPLLVLDEAELLPPALLDELHDLLQPQRSHHFHNAIYVLLSGAGGIEITHFVLQNASRMLPPLRHSAGSTQTEESPAQELLTSLRELLAREHPLWHTAAIVPFLLLDKPDVVNCFREEMAGEGFFPEQALAEHLAEQLSYYHVAGHEFAITGCKQVVAKVNLLQHKPAHAGH</sequence>
<feature type="chain" id="PRO_0000287490" description="Torsin-4A">
    <location>
        <begin position="1"/>
        <end position="426"/>
    </location>
</feature>
<feature type="transmembrane region" description="Helical" evidence="2">
    <location>
        <begin position="117"/>
        <end position="133"/>
    </location>
</feature>
<feature type="region of interest" description="Disordered" evidence="3">
    <location>
        <begin position="41"/>
        <end position="60"/>
    </location>
</feature>
<feature type="compositionally biased region" description="Low complexity" evidence="3">
    <location>
        <begin position="48"/>
        <end position="60"/>
    </location>
</feature>
<feature type="binding site" evidence="2">
    <location>
        <begin position="189"/>
        <end position="196"/>
    </location>
    <ligand>
        <name>ATP</name>
        <dbReference type="ChEBI" id="CHEBI:30616"/>
    </ligand>
</feature>
<feature type="modified residue" description="Phosphoserine" evidence="1">
    <location>
        <position position="58"/>
    </location>
</feature>
<feature type="modified residue" description="Phosphoserine" evidence="1">
    <location>
        <position position="76"/>
    </location>
</feature>
<feature type="modified residue" description="Phosphothreonine" evidence="1">
    <location>
        <position position="84"/>
    </location>
</feature>
<feature type="modified residue" description="Phosphoserine" evidence="1">
    <location>
        <position position="101"/>
    </location>
</feature>
<comment type="subcellular location">
    <subcellularLocation>
        <location evidence="4">Membrane</location>
        <topology evidence="4">Single-pass membrane protein</topology>
    </subcellularLocation>
</comment>
<comment type="similarity">
    <text evidence="4">Belongs to the ClpA/ClpB family. Torsin subfamily.</text>
</comment>
<comment type="sequence caution" evidence="4">
    <conflict type="frameshift">
        <sequence resource="EMBL-CDS" id="AAH13092"/>
    </conflict>
</comment>
<gene>
    <name type="primary">Tor4a</name>
</gene>
<proteinExistence type="evidence at transcript level"/>
<reference key="1">
    <citation type="journal article" date="2005" name="Science">
        <title>The transcriptional landscape of the mammalian genome.</title>
        <authorList>
            <person name="Carninci P."/>
            <person name="Kasukawa T."/>
            <person name="Katayama S."/>
            <person name="Gough J."/>
            <person name="Frith M.C."/>
            <person name="Maeda N."/>
            <person name="Oyama R."/>
            <person name="Ravasi T."/>
            <person name="Lenhard B."/>
            <person name="Wells C."/>
            <person name="Kodzius R."/>
            <person name="Shimokawa K."/>
            <person name="Bajic V.B."/>
            <person name="Brenner S.E."/>
            <person name="Batalov S."/>
            <person name="Forrest A.R."/>
            <person name="Zavolan M."/>
            <person name="Davis M.J."/>
            <person name="Wilming L.G."/>
            <person name="Aidinis V."/>
            <person name="Allen J.E."/>
            <person name="Ambesi-Impiombato A."/>
            <person name="Apweiler R."/>
            <person name="Aturaliya R.N."/>
            <person name="Bailey T.L."/>
            <person name="Bansal M."/>
            <person name="Baxter L."/>
            <person name="Beisel K.W."/>
            <person name="Bersano T."/>
            <person name="Bono H."/>
            <person name="Chalk A.M."/>
            <person name="Chiu K.P."/>
            <person name="Choudhary V."/>
            <person name="Christoffels A."/>
            <person name="Clutterbuck D.R."/>
            <person name="Crowe M.L."/>
            <person name="Dalla E."/>
            <person name="Dalrymple B.P."/>
            <person name="de Bono B."/>
            <person name="Della Gatta G."/>
            <person name="di Bernardo D."/>
            <person name="Down T."/>
            <person name="Engstrom P."/>
            <person name="Fagiolini M."/>
            <person name="Faulkner G."/>
            <person name="Fletcher C.F."/>
            <person name="Fukushima T."/>
            <person name="Furuno M."/>
            <person name="Futaki S."/>
            <person name="Gariboldi M."/>
            <person name="Georgii-Hemming P."/>
            <person name="Gingeras T.R."/>
            <person name="Gojobori T."/>
            <person name="Green R.E."/>
            <person name="Gustincich S."/>
            <person name="Harbers M."/>
            <person name="Hayashi Y."/>
            <person name="Hensch T.K."/>
            <person name="Hirokawa N."/>
            <person name="Hill D."/>
            <person name="Huminiecki L."/>
            <person name="Iacono M."/>
            <person name="Ikeo K."/>
            <person name="Iwama A."/>
            <person name="Ishikawa T."/>
            <person name="Jakt M."/>
            <person name="Kanapin A."/>
            <person name="Katoh M."/>
            <person name="Kawasawa Y."/>
            <person name="Kelso J."/>
            <person name="Kitamura H."/>
            <person name="Kitano H."/>
            <person name="Kollias G."/>
            <person name="Krishnan S.P."/>
            <person name="Kruger A."/>
            <person name="Kummerfeld S.K."/>
            <person name="Kurochkin I.V."/>
            <person name="Lareau L.F."/>
            <person name="Lazarevic D."/>
            <person name="Lipovich L."/>
            <person name="Liu J."/>
            <person name="Liuni S."/>
            <person name="McWilliam S."/>
            <person name="Madan Babu M."/>
            <person name="Madera M."/>
            <person name="Marchionni L."/>
            <person name="Matsuda H."/>
            <person name="Matsuzawa S."/>
            <person name="Miki H."/>
            <person name="Mignone F."/>
            <person name="Miyake S."/>
            <person name="Morris K."/>
            <person name="Mottagui-Tabar S."/>
            <person name="Mulder N."/>
            <person name="Nakano N."/>
            <person name="Nakauchi H."/>
            <person name="Ng P."/>
            <person name="Nilsson R."/>
            <person name="Nishiguchi S."/>
            <person name="Nishikawa S."/>
            <person name="Nori F."/>
            <person name="Ohara O."/>
            <person name="Okazaki Y."/>
            <person name="Orlando V."/>
            <person name="Pang K.C."/>
            <person name="Pavan W.J."/>
            <person name="Pavesi G."/>
            <person name="Pesole G."/>
            <person name="Petrovsky N."/>
            <person name="Piazza S."/>
            <person name="Reed J."/>
            <person name="Reid J.F."/>
            <person name="Ring B.Z."/>
            <person name="Ringwald M."/>
            <person name="Rost B."/>
            <person name="Ruan Y."/>
            <person name="Salzberg S.L."/>
            <person name="Sandelin A."/>
            <person name="Schneider C."/>
            <person name="Schoenbach C."/>
            <person name="Sekiguchi K."/>
            <person name="Semple C.A."/>
            <person name="Seno S."/>
            <person name="Sessa L."/>
            <person name="Sheng Y."/>
            <person name="Shibata Y."/>
            <person name="Shimada H."/>
            <person name="Shimada K."/>
            <person name="Silva D."/>
            <person name="Sinclair B."/>
            <person name="Sperling S."/>
            <person name="Stupka E."/>
            <person name="Sugiura K."/>
            <person name="Sultana R."/>
            <person name="Takenaka Y."/>
            <person name="Taki K."/>
            <person name="Tammoja K."/>
            <person name="Tan S.L."/>
            <person name="Tang S."/>
            <person name="Taylor M.S."/>
            <person name="Tegner J."/>
            <person name="Teichmann S.A."/>
            <person name="Ueda H.R."/>
            <person name="van Nimwegen E."/>
            <person name="Verardo R."/>
            <person name="Wei C.L."/>
            <person name="Yagi K."/>
            <person name="Yamanishi H."/>
            <person name="Zabarovsky E."/>
            <person name="Zhu S."/>
            <person name="Zimmer A."/>
            <person name="Hide W."/>
            <person name="Bult C."/>
            <person name="Grimmond S.M."/>
            <person name="Teasdale R.D."/>
            <person name="Liu E.T."/>
            <person name="Brusic V."/>
            <person name="Quackenbush J."/>
            <person name="Wahlestedt C."/>
            <person name="Mattick J.S."/>
            <person name="Hume D.A."/>
            <person name="Kai C."/>
            <person name="Sasaki D."/>
            <person name="Tomaru Y."/>
            <person name="Fukuda S."/>
            <person name="Kanamori-Katayama M."/>
            <person name="Suzuki M."/>
            <person name="Aoki J."/>
            <person name="Arakawa T."/>
            <person name="Iida J."/>
            <person name="Imamura K."/>
            <person name="Itoh M."/>
            <person name="Kato T."/>
            <person name="Kawaji H."/>
            <person name="Kawagashira N."/>
            <person name="Kawashima T."/>
            <person name="Kojima M."/>
            <person name="Kondo S."/>
            <person name="Konno H."/>
            <person name="Nakano K."/>
            <person name="Ninomiya N."/>
            <person name="Nishio T."/>
            <person name="Okada M."/>
            <person name="Plessy C."/>
            <person name="Shibata K."/>
            <person name="Shiraki T."/>
            <person name="Suzuki S."/>
            <person name="Tagami M."/>
            <person name="Waki K."/>
            <person name="Watahiki A."/>
            <person name="Okamura-Oho Y."/>
            <person name="Suzuki H."/>
            <person name="Kawai J."/>
            <person name="Hayashizaki Y."/>
        </authorList>
    </citation>
    <scope>NUCLEOTIDE SEQUENCE [LARGE SCALE MRNA]</scope>
    <source>
        <strain>C57BL/6J</strain>
        <strain>NOD</strain>
        <tissue>Brain cortex</tissue>
    </source>
</reference>
<reference key="2">
    <citation type="journal article" date="2009" name="PLoS Biol.">
        <title>Lineage-specific biology revealed by a finished genome assembly of the mouse.</title>
        <authorList>
            <person name="Church D.M."/>
            <person name="Goodstadt L."/>
            <person name="Hillier L.W."/>
            <person name="Zody M.C."/>
            <person name="Goldstein S."/>
            <person name="She X."/>
            <person name="Bult C.J."/>
            <person name="Agarwala R."/>
            <person name="Cherry J.L."/>
            <person name="DiCuccio M."/>
            <person name="Hlavina W."/>
            <person name="Kapustin Y."/>
            <person name="Meric P."/>
            <person name="Maglott D."/>
            <person name="Birtle Z."/>
            <person name="Marques A.C."/>
            <person name="Graves T."/>
            <person name="Zhou S."/>
            <person name="Teague B."/>
            <person name="Potamousis K."/>
            <person name="Churas C."/>
            <person name="Place M."/>
            <person name="Herschleb J."/>
            <person name="Runnheim R."/>
            <person name="Forrest D."/>
            <person name="Amos-Landgraf J."/>
            <person name="Schwartz D.C."/>
            <person name="Cheng Z."/>
            <person name="Lindblad-Toh K."/>
            <person name="Eichler E.E."/>
            <person name="Ponting C.P."/>
        </authorList>
    </citation>
    <scope>NUCLEOTIDE SEQUENCE [LARGE SCALE GENOMIC DNA]</scope>
    <source>
        <strain>C57BL/6J</strain>
    </source>
</reference>
<reference key="3">
    <citation type="journal article" date="2004" name="Genome Res.">
        <title>The status, quality, and expansion of the NIH full-length cDNA project: the Mammalian Gene Collection (MGC).</title>
        <authorList>
            <consortium name="The MGC Project Team"/>
        </authorList>
    </citation>
    <scope>NUCLEOTIDE SEQUENCE [LARGE SCALE MRNA]</scope>
    <source>
        <strain>FVB/N</strain>
        <tissue>Mammary tumor</tissue>
    </source>
</reference>
<keyword id="KW-0067">ATP-binding</keyword>
<keyword id="KW-0472">Membrane</keyword>
<keyword id="KW-0547">Nucleotide-binding</keyword>
<keyword id="KW-0597">Phosphoprotein</keyword>
<keyword id="KW-1185">Reference proteome</keyword>
<keyword id="KW-0812">Transmembrane</keyword>
<keyword id="KW-1133">Transmembrane helix</keyword>
<dbReference type="EMBL" id="AK043559">
    <property type="protein sequence ID" value="BAC31581.1"/>
    <property type="molecule type" value="mRNA"/>
</dbReference>
<dbReference type="EMBL" id="AK082899">
    <property type="protein sequence ID" value="BAC38677.1"/>
    <property type="molecule type" value="mRNA"/>
</dbReference>
<dbReference type="EMBL" id="AK154508">
    <property type="protein sequence ID" value="BAE32638.1"/>
    <property type="molecule type" value="mRNA"/>
</dbReference>
<dbReference type="EMBL" id="AK155540">
    <property type="protein sequence ID" value="BAE33317.1"/>
    <property type="molecule type" value="mRNA"/>
</dbReference>
<dbReference type="EMBL" id="AK171551">
    <property type="protein sequence ID" value="BAE42522.1"/>
    <property type="molecule type" value="mRNA"/>
</dbReference>
<dbReference type="EMBL" id="AL732309">
    <property type="status" value="NOT_ANNOTATED_CDS"/>
    <property type="molecule type" value="Genomic_DNA"/>
</dbReference>
<dbReference type="EMBL" id="BC013092">
    <property type="protein sequence ID" value="AAH13092.1"/>
    <property type="status" value="ALT_FRAME"/>
    <property type="molecule type" value="mRNA"/>
</dbReference>
<dbReference type="CCDS" id="CCDS15750.1"/>
<dbReference type="RefSeq" id="NP_666227.2">
    <property type="nucleotide sequence ID" value="NM_146115.4"/>
</dbReference>
<dbReference type="RefSeq" id="XP_036016545.1">
    <property type="nucleotide sequence ID" value="XM_036160652.1"/>
</dbReference>
<dbReference type="SMR" id="Q8BH02"/>
<dbReference type="BioGRID" id="230641">
    <property type="interactions" value="1"/>
</dbReference>
<dbReference type="FunCoup" id="Q8BH02">
    <property type="interactions" value="261"/>
</dbReference>
<dbReference type="STRING" id="10090.ENSMUSP00000080548"/>
<dbReference type="iPTMnet" id="Q8BH02"/>
<dbReference type="PhosphoSitePlus" id="Q8BH02"/>
<dbReference type="jPOST" id="Q8BH02"/>
<dbReference type="PaxDb" id="10090-ENSMUSP00000080548"/>
<dbReference type="ProteomicsDB" id="259499"/>
<dbReference type="Antibodypedia" id="48995">
    <property type="antibodies" value="21 antibodies from 12 providers"/>
</dbReference>
<dbReference type="Ensembl" id="ENSMUST00000081869.7">
    <property type="protein sequence ID" value="ENSMUSP00000080548.7"/>
    <property type="gene ID" value="ENSMUSG00000059555.7"/>
</dbReference>
<dbReference type="GeneID" id="227612"/>
<dbReference type="KEGG" id="mmu:227612"/>
<dbReference type="UCSC" id="uc008iql.2">
    <property type="organism name" value="mouse"/>
</dbReference>
<dbReference type="AGR" id="MGI:2442720"/>
<dbReference type="CTD" id="54863"/>
<dbReference type="MGI" id="MGI:2442720">
    <property type="gene designation" value="Tor4a"/>
</dbReference>
<dbReference type="VEuPathDB" id="HostDB:ENSMUSG00000059555"/>
<dbReference type="eggNOG" id="KOG2170">
    <property type="taxonomic scope" value="Eukaryota"/>
</dbReference>
<dbReference type="GeneTree" id="ENSGT00950000182888"/>
<dbReference type="HOGENOM" id="CLU_053537_1_0_1"/>
<dbReference type="InParanoid" id="Q8BH02"/>
<dbReference type="OMA" id="EFAITGC"/>
<dbReference type="OrthoDB" id="9443236at2759"/>
<dbReference type="PhylomeDB" id="Q8BH02"/>
<dbReference type="TreeFam" id="TF314941"/>
<dbReference type="Reactome" id="R-MMU-114608">
    <property type="pathway name" value="Platelet degranulation"/>
</dbReference>
<dbReference type="BioGRID-ORCS" id="227612">
    <property type="hits" value="4 hits in 79 CRISPR screens"/>
</dbReference>
<dbReference type="ChiTaRS" id="Tor4a">
    <property type="organism name" value="mouse"/>
</dbReference>
<dbReference type="PRO" id="PR:Q8BH02"/>
<dbReference type="Proteomes" id="UP000000589">
    <property type="component" value="Chromosome 2"/>
</dbReference>
<dbReference type="RNAct" id="Q8BH02">
    <property type="molecule type" value="protein"/>
</dbReference>
<dbReference type="Bgee" id="ENSMUSG00000059555">
    <property type="expression patterns" value="Expressed in peripheral lymph node and 179 other cell types or tissues"/>
</dbReference>
<dbReference type="ExpressionAtlas" id="Q8BH02">
    <property type="expression patterns" value="baseline and differential"/>
</dbReference>
<dbReference type="GO" id="GO:0005737">
    <property type="term" value="C:cytoplasm"/>
    <property type="evidence" value="ECO:0007669"/>
    <property type="project" value="UniProtKB-ARBA"/>
</dbReference>
<dbReference type="GO" id="GO:0012505">
    <property type="term" value="C:endomembrane system"/>
    <property type="evidence" value="ECO:0007669"/>
    <property type="project" value="UniProtKB-ARBA"/>
</dbReference>
<dbReference type="GO" id="GO:0043231">
    <property type="term" value="C:intracellular membrane-bounded organelle"/>
    <property type="evidence" value="ECO:0007669"/>
    <property type="project" value="UniProtKB-ARBA"/>
</dbReference>
<dbReference type="GO" id="GO:0016020">
    <property type="term" value="C:membrane"/>
    <property type="evidence" value="ECO:0007669"/>
    <property type="project" value="UniProtKB-SubCell"/>
</dbReference>
<dbReference type="GO" id="GO:0005524">
    <property type="term" value="F:ATP binding"/>
    <property type="evidence" value="ECO:0007669"/>
    <property type="project" value="UniProtKB-KW"/>
</dbReference>
<dbReference type="GO" id="GO:0016887">
    <property type="term" value="F:ATP hydrolysis activity"/>
    <property type="evidence" value="ECO:0007669"/>
    <property type="project" value="InterPro"/>
</dbReference>
<dbReference type="FunFam" id="3.40.50.300:FF:001429">
    <property type="entry name" value="Torsin family protein C9orf167-like"/>
    <property type="match status" value="1"/>
</dbReference>
<dbReference type="Gene3D" id="3.40.50.300">
    <property type="entry name" value="P-loop containing nucleotide triphosphate hydrolases"/>
    <property type="match status" value="1"/>
</dbReference>
<dbReference type="InterPro" id="IPR003593">
    <property type="entry name" value="AAA+_ATPase"/>
</dbReference>
<dbReference type="InterPro" id="IPR001270">
    <property type="entry name" value="ClpA/B"/>
</dbReference>
<dbReference type="InterPro" id="IPR027417">
    <property type="entry name" value="P-loop_NTPase"/>
</dbReference>
<dbReference type="InterPro" id="IPR010448">
    <property type="entry name" value="Torsin"/>
</dbReference>
<dbReference type="PANTHER" id="PTHR10760">
    <property type="entry name" value="TORSIN"/>
    <property type="match status" value="1"/>
</dbReference>
<dbReference type="PANTHER" id="PTHR10760:SF1">
    <property type="entry name" value="TORSIN-4A"/>
    <property type="match status" value="1"/>
</dbReference>
<dbReference type="Pfam" id="PF06309">
    <property type="entry name" value="Torsin"/>
    <property type="match status" value="1"/>
</dbReference>
<dbReference type="PRINTS" id="PR00300">
    <property type="entry name" value="CLPPROTEASEA"/>
</dbReference>
<dbReference type="SMART" id="SM00382">
    <property type="entry name" value="AAA"/>
    <property type="match status" value="1"/>
</dbReference>
<dbReference type="SUPFAM" id="SSF52540">
    <property type="entry name" value="P-loop containing nucleoside triphosphate hydrolases"/>
    <property type="match status" value="1"/>
</dbReference>
<accession>Q8BH02</accession>
<accession>Q921D7</accession>
<evidence type="ECO:0000250" key="1">
    <source>
        <dbReference type="UniProtKB" id="Q9NXH8"/>
    </source>
</evidence>
<evidence type="ECO:0000255" key="2"/>
<evidence type="ECO:0000256" key="3">
    <source>
        <dbReference type="SAM" id="MobiDB-lite"/>
    </source>
</evidence>
<evidence type="ECO:0000305" key="4"/>